<proteinExistence type="inferred from homology"/>
<evidence type="ECO:0000250" key="1">
    <source>
        <dbReference type="UniProtKB" id="O93400"/>
    </source>
</evidence>
<evidence type="ECO:0000250" key="2">
    <source>
        <dbReference type="UniProtKB" id="P60706"/>
    </source>
</evidence>
<evidence type="ECO:0000250" key="3">
    <source>
        <dbReference type="UniProtKB" id="P60709"/>
    </source>
</evidence>
<evidence type="ECO:0000250" key="4">
    <source>
        <dbReference type="UniProtKB" id="P60710"/>
    </source>
</evidence>
<evidence type="ECO:0000250" key="5">
    <source>
        <dbReference type="UniProtKB" id="P68137"/>
    </source>
</evidence>
<evidence type="ECO:0000305" key="6"/>
<keyword id="KW-0067">ATP-binding</keyword>
<keyword id="KW-0963">Cytoplasm</keyword>
<keyword id="KW-0206">Cytoskeleton</keyword>
<keyword id="KW-0378">Hydrolase</keyword>
<keyword id="KW-0488">Methylation</keyword>
<keyword id="KW-0547">Nucleotide-binding</keyword>
<keyword id="KW-0539">Nucleus</keyword>
<keyword id="KW-0558">Oxidation</keyword>
<name>ACTB_XENBO</name>
<gene>
    <name type="primary">actb</name>
</gene>
<dbReference type="EC" id="3.6.4.-" evidence="5"/>
<dbReference type="EMBL" id="X07507">
    <property type="protein sequence ID" value="CAA30390.1"/>
    <property type="molecule type" value="Genomic_DNA"/>
</dbReference>
<dbReference type="EMBL" id="X07508">
    <property type="protein sequence ID" value="CAA30390.1"/>
    <property type="status" value="JOINED"/>
    <property type="molecule type" value="Genomic_DNA"/>
</dbReference>
<dbReference type="EMBL" id="X07509">
    <property type="protein sequence ID" value="CAA30390.1"/>
    <property type="status" value="JOINED"/>
    <property type="molecule type" value="Genomic_DNA"/>
</dbReference>
<dbReference type="PIR" id="S01077">
    <property type="entry name" value="S01077"/>
</dbReference>
<dbReference type="SMR" id="P15475"/>
<dbReference type="GO" id="GO:0015629">
    <property type="term" value="C:actin cytoskeleton"/>
    <property type="evidence" value="ECO:0000250"/>
    <property type="project" value="UniProtKB"/>
</dbReference>
<dbReference type="GO" id="GO:0005856">
    <property type="term" value="C:cytoskeleton"/>
    <property type="evidence" value="ECO:0000250"/>
    <property type="project" value="AgBase"/>
</dbReference>
<dbReference type="GO" id="GO:0097433">
    <property type="term" value="C:dense body"/>
    <property type="evidence" value="ECO:0000250"/>
    <property type="project" value="AgBase"/>
</dbReference>
<dbReference type="GO" id="GO:0005925">
    <property type="term" value="C:focal adhesion"/>
    <property type="evidence" value="ECO:0000250"/>
    <property type="project" value="AgBase"/>
</dbReference>
<dbReference type="GO" id="GO:0005634">
    <property type="term" value="C:nucleus"/>
    <property type="evidence" value="ECO:0000250"/>
    <property type="project" value="UniProtKB"/>
</dbReference>
<dbReference type="GO" id="GO:0005886">
    <property type="term" value="C:plasma membrane"/>
    <property type="evidence" value="ECO:0000250"/>
    <property type="project" value="AgBase"/>
</dbReference>
<dbReference type="GO" id="GO:0005524">
    <property type="term" value="F:ATP binding"/>
    <property type="evidence" value="ECO:0007669"/>
    <property type="project" value="UniProtKB-KW"/>
</dbReference>
<dbReference type="GO" id="GO:0016787">
    <property type="term" value="F:hydrolase activity"/>
    <property type="evidence" value="ECO:0007669"/>
    <property type="project" value="UniProtKB-KW"/>
</dbReference>
<dbReference type="CDD" id="cd10224">
    <property type="entry name" value="ASKHA_NBD_actin"/>
    <property type="match status" value="1"/>
</dbReference>
<dbReference type="FunFam" id="2.30.36.70:FF:000001">
    <property type="entry name" value="Actin, alpha skeletal muscle"/>
    <property type="match status" value="1"/>
</dbReference>
<dbReference type="FunFam" id="3.30.420.40:FF:000131">
    <property type="entry name" value="Actin, alpha skeletal muscle"/>
    <property type="match status" value="1"/>
</dbReference>
<dbReference type="FunFam" id="3.30.420.40:FF:000291">
    <property type="entry name" value="Actin, alpha skeletal muscle"/>
    <property type="match status" value="1"/>
</dbReference>
<dbReference type="FunFam" id="3.90.640.10:FF:000047">
    <property type="entry name" value="Actin, alpha skeletal muscle"/>
    <property type="match status" value="1"/>
</dbReference>
<dbReference type="FunFam" id="3.30.420.40:FF:000058">
    <property type="entry name" value="Putative actin-related protein 5"/>
    <property type="match status" value="1"/>
</dbReference>
<dbReference type="Gene3D" id="3.30.420.40">
    <property type="match status" value="2"/>
</dbReference>
<dbReference type="Gene3D" id="3.90.640.10">
    <property type="entry name" value="Actin, Chain A, domain 4"/>
    <property type="match status" value="1"/>
</dbReference>
<dbReference type="InterPro" id="IPR004000">
    <property type="entry name" value="Actin"/>
</dbReference>
<dbReference type="InterPro" id="IPR020902">
    <property type="entry name" value="Actin/actin-like_CS"/>
</dbReference>
<dbReference type="InterPro" id="IPR004001">
    <property type="entry name" value="Actin_CS"/>
</dbReference>
<dbReference type="InterPro" id="IPR043129">
    <property type="entry name" value="ATPase_NBD"/>
</dbReference>
<dbReference type="PANTHER" id="PTHR11937">
    <property type="entry name" value="ACTIN"/>
    <property type="match status" value="1"/>
</dbReference>
<dbReference type="Pfam" id="PF00022">
    <property type="entry name" value="Actin"/>
    <property type="match status" value="1"/>
</dbReference>
<dbReference type="PRINTS" id="PR00190">
    <property type="entry name" value="ACTIN"/>
</dbReference>
<dbReference type="SMART" id="SM00268">
    <property type="entry name" value="ACTIN"/>
    <property type="match status" value="1"/>
</dbReference>
<dbReference type="SUPFAM" id="SSF53067">
    <property type="entry name" value="Actin-like ATPase domain"/>
    <property type="match status" value="2"/>
</dbReference>
<dbReference type="PROSITE" id="PS00406">
    <property type="entry name" value="ACTINS_1"/>
    <property type="match status" value="1"/>
</dbReference>
<dbReference type="PROSITE" id="PS00432">
    <property type="entry name" value="ACTINS_2"/>
    <property type="match status" value="1"/>
</dbReference>
<dbReference type="PROSITE" id="PS01132">
    <property type="entry name" value="ACTINS_ACT_LIKE"/>
    <property type="match status" value="1"/>
</dbReference>
<comment type="function">
    <text evidence="3">Actin is a highly conserved protein that polymerizes to produce filaments that form cross-linked networks in the cytoplasm of cells. Actin exists in both monomeric (G-actin) and polymeric (F-actin) forms, both forms playing key functions, such as cell motility and contraction. In addition to their role in the cytoplasmic cytoskeleton, G- and F-actin also localize in the nucleus, and regulate gene transcription and motility and repair of damaged DNA.</text>
</comment>
<comment type="catalytic activity">
    <reaction evidence="5">
        <text>ATP + H2O = ADP + phosphate + H(+)</text>
        <dbReference type="Rhea" id="RHEA:13065"/>
        <dbReference type="ChEBI" id="CHEBI:15377"/>
        <dbReference type="ChEBI" id="CHEBI:15378"/>
        <dbReference type="ChEBI" id="CHEBI:30616"/>
        <dbReference type="ChEBI" id="CHEBI:43474"/>
        <dbReference type="ChEBI" id="CHEBI:456216"/>
    </reaction>
</comment>
<comment type="subunit">
    <text evidence="3 4">Polymerization of globular actin (G-actin) leads to a structural filament (F-actin) in the form of a two-stranded helix (By similarity). Each actin can bind to 4 others (By similarity).</text>
</comment>
<comment type="subcellular location">
    <subcellularLocation>
        <location evidence="4">Cytoplasm</location>
        <location evidence="4">Cytoskeleton</location>
    </subcellularLocation>
    <subcellularLocation>
        <location evidence="1">Nucleus</location>
    </subcellularLocation>
</comment>
<comment type="PTM">
    <text evidence="4">Oxidation of Met-45 and Met-48 by MICALs (mical1, mical2 or mical3) to form methionine sulfoxide promotes actin filament depolymerization. Mical1 and mical2 produce the (R)-S-oxide form. The (R)-S-oxide form is reverted by msrb1 and msrb2, which promote actin repolymerization.</text>
</comment>
<comment type="PTM">
    <text evidence="2">Methylation at His-74 by SETD3. Methylation stabilizes actin filaments.</text>
</comment>
<comment type="miscellaneous">
    <text evidence="1">In vertebrates 3 main groups of actin isoforms, alpha, beta and gamma have been identified. The alpha actins are found in muscle tissues and are a major constituent of the contractile apparatus. The beta and gamma actins coexist in most cell types as components of the cytoskeleton and as mediators of internal cell motility.</text>
</comment>
<comment type="similarity">
    <text evidence="6">Belongs to the actin family.</text>
</comment>
<sequence length="376" mass="41848">MADDDIAALVIDNGSGMCKAGFAGDDAPRAVFPSIVGRPRHQGVMVGMGQKDSYVGDEAQSKRGILTLKYPIEHGIVTNWDDMEKIWHHTFYNELRVAPEEHPVLLTEAPLNPKANREKMTQIMFETFNTPAMYVAIQAVLSLYASGRTTGIVMDSGDGVTHTVPIYEGYALPHAILRLDLAGRDLTDYLMKILTERGYSFTTTAEREIVRDIKEKLCYVALDFEQEMATAASSSSLEKSYELPDGQVITIGNERFRCPEALFQPSFLGMESCGIHETTFNSIMKCDVDIRKDLYANTVLSGGTTMYPGIADRMQKEITALAPSTMKIKIIAPPERKYSVWIGGSILALLSTFQQMWISKQEYDESGPSIVHRKCF</sequence>
<protein>
    <recommendedName>
        <fullName>Actin, cytoplasmic 1</fullName>
        <ecNumber evidence="5">3.6.4.-</ecNumber>
    </recommendedName>
    <alternativeName>
        <fullName>Beta actin</fullName>
    </alternativeName>
</protein>
<accession>P15475</accession>
<feature type="initiator methionine" description="Removed" evidence="2">
    <location>
        <position position="1"/>
    </location>
</feature>
<feature type="chain" id="PRO_0000000791" description="Actin, cytoplasmic 1">
    <location>
        <begin position="2"/>
        <end position="376"/>
    </location>
</feature>
<feature type="modified residue" description="Methionine (R)-sulfoxide" evidence="4">
    <location>
        <position position="45"/>
    </location>
</feature>
<feature type="modified residue" description="Methionine (R)-sulfoxide" evidence="4">
    <location>
        <position position="48"/>
    </location>
</feature>
<feature type="modified residue" description="Tele-methylhistidine" evidence="4">
    <location>
        <position position="74"/>
    </location>
</feature>
<reference key="1">
    <citation type="journal article" date="1988" name="J. Mol. Evol.">
        <title>Cytoskeletal actin gene families of Xenopus borealis and Xenopus laevis.</title>
        <authorList>
            <person name="Cross G.S."/>
            <person name="Wilson C."/>
            <person name="Erba H.P."/>
            <person name="Woodland H.R."/>
        </authorList>
    </citation>
    <scope>NUCLEOTIDE SEQUENCE [GENOMIC DNA]</scope>
</reference>
<organism>
    <name type="scientific">Xenopus borealis</name>
    <name type="common">Kenyan clawed frog</name>
    <dbReference type="NCBI Taxonomy" id="8354"/>
    <lineage>
        <taxon>Eukaryota</taxon>
        <taxon>Metazoa</taxon>
        <taxon>Chordata</taxon>
        <taxon>Craniata</taxon>
        <taxon>Vertebrata</taxon>
        <taxon>Euteleostomi</taxon>
        <taxon>Amphibia</taxon>
        <taxon>Batrachia</taxon>
        <taxon>Anura</taxon>
        <taxon>Pipoidea</taxon>
        <taxon>Pipidae</taxon>
        <taxon>Xenopodinae</taxon>
        <taxon>Xenopus</taxon>
        <taxon>Xenopus</taxon>
    </lineage>
</organism>